<name>AAEA_SERP5</name>
<keyword id="KW-0997">Cell inner membrane</keyword>
<keyword id="KW-1003">Cell membrane</keyword>
<keyword id="KW-0472">Membrane</keyword>
<keyword id="KW-0812">Transmembrane</keyword>
<keyword id="KW-1133">Transmembrane helix</keyword>
<keyword id="KW-0813">Transport</keyword>
<protein>
    <recommendedName>
        <fullName evidence="1">p-hydroxybenzoic acid efflux pump subunit AaeA</fullName>
        <shortName evidence="1">pHBA efflux pump protein A</shortName>
    </recommendedName>
</protein>
<organism>
    <name type="scientific">Serratia proteamaculans (strain 568)</name>
    <dbReference type="NCBI Taxonomy" id="399741"/>
    <lineage>
        <taxon>Bacteria</taxon>
        <taxon>Pseudomonadati</taxon>
        <taxon>Pseudomonadota</taxon>
        <taxon>Gammaproteobacteria</taxon>
        <taxon>Enterobacterales</taxon>
        <taxon>Yersiniaceae</taxon>
        <taxon>Serratia</taxon>
    </lineage>
</organism>
<gene>
    <name evidence="1" type="primary">aaeA</name>
    <name type="ordered locus">Spro_4391</name>
</gene>
<dbReference type="EMBL" id="CP000826">
    <property type="protein sequence ID" value="ABV43485.1"/>
    <property type="molecule type" value="Genomic_DNA"/>
</dbReference>
<dbReference type="STRING" id="399741.Spro_4391"/>
<dbReference type="KEGG" id="spe:Spro_4391"/>
<dbReference type="eggNOG" id="COG1566">
    <property type="taxonomic scope" value="Bacteria"/>
</dbReference>
<dbReference type="HOGENOM" id="CLU_018816_15_2_6"/>
<dbReference type="OrthoDB" id="9811754at2"/>
<dbReference type="GO" id="GO:0005886">
    <property type="term" value="C:plasma membrane"/>
    <property type="evidence" value="ECO:0007669"/>
    <property type="project" value="UniProtKB-SubCell"/>
</dbReference>
<dbReference type="GO" id="GO:0022857">
    <property type="term" value="F:transmembrane transporter activity"/>
    <property type="evidence" value="ECO:0007669"/>
    <property type="project" value="UniProtKB-UniRule"/>
</dbReference>
<dbReference type="GO" id="GO:0009636">
    <property type="term" value="P:response to toxic substance"/>
    <property type="evidence" value="ECO:0007669"/>
    <property type="project" value="UniProtKB-ARBA"/>
</dbReference>
<dbReference type="Gene3D" id="2.40.30.170">
    <property type="match status" value="1"/>
</dbReference>
<dbReference type="Gene3D" id="2.40.50.100">
    <property type="match status" value="1"/>
</dbReference>
<dbReference type="Gene3D" id="1.10.287.470">
    <property type="entry name" value="Helix hairpin bin"/>
    <property type="match status" value="1"/>
</dbReference>
<dbReference type="HAMAP" id="MF_01544">
    <property type="entry name" value="AaeA"/>
    <property type="match status" value="1"/>
</dbReference>
<dbReference type="InterPro" id="IPR043602">
    <property type="entry name" value="CusB-like_dom_1"/>
</dbReference>
<dbReference type="InterPro" id="IPR032317">
    <property type="entry name" value="CusB_D23"/>
</dbReference>
<dbReference type="InterPro" id="IPR050393">
    <property type="entry name" value="MFP_Efflux_Pump"/>
</dbReference>
<dbReference type="InterPro" id="IPR022871">
    <property type="entry name" value="PHBA_efflux_pump_AaeA"/>
</dbReference>
<dbReference type="InterPro" id="IPR006143">
    <property type="entry name" value="RND_pump_MFP"/>
</dbReference>
<dbReference type="NCBIfam" id="NF007850">
    <property type="entry name" value="PRK10559.1"/>
    <property type="match status" value="1"/>
</dbReference>
<dbReference type="NCBIfam" id="TIGR01730">
    <property type="entry name" value="RND_mfp"/>
    <property type="match status" value="1"/>
</dbReference>
<dbReference type="PANTHER" id="PTHR30367:SF12">
    <property type="entry name" value="P-HYDROXYBENZOIC ACID EFFLUX PUMP SUBUNIT AAEA"/>
    <property type="match status" value="1"/>
</dbReference>
<dbReference type="PANTHER" id="PTHR30367">
    <property type="entry name" value="P-HYDROXYBENZOIC ACID EFFLUX PUMP SUBUNIT AAEA-RELATED"/>
    <property type="match status" value="1"/>
</dbReference>
<dbReference type="Pfam" id="PF00529">
    <property type="entry name" value="CusB_dom_1"/>
    <property type="match status" value="1"/>
</dbReference>
<dbReference type="Pfam" id="PF16576">
    <property type="entry name" value="HlyD_D23"/>
    <property type="match status" value="1"/>
</dbReference>
<dbReference type="SUPFAM" id="SSF111369">
    <property type="entry name" value="HlyD-like secretion proteins"/>
    <property type="match status" value="1"/>
</dbReference>
<sequence length="311" mass="34200">MKNFSIKITRIAITLILVLLGIIAIFKAWVFYTESPWTRDAKFTADVVAIAPDVTGLLTDVPLVDNQLVKKGQVLLVIDQPRYQQALAEANADVAYYQTLAAEKRREAGRRVRLGVQAMSQEEIDQANNVLQTVEHQLAKAVATRELAKLDLERTTVRAPADGWITNLNVHAGEYITRGSVAVALVKKNSFYILAYLEETKLNGLNKGDRAEITPLGSNRIMHGTVDSVAAAVNNSSSTVNSKGLASIDSNLEWVRLAQRVPVKILLDDKDQLHPYPAGTTATVVITGKNDRATDSGSPFVRLMHRLREFG</sequence>
<reference key="1">
    <citation type="submission" date="2007-09" db="EMBL/GenBank/DDBJ databases">
        <title>Complete sequence of chromosome of Serratia proteamaculans 568.</title>
        <authorList>
            <consortium name="US DOE Joint Genome Institute"/>
            <person name="Copeland A."/>
            <person name="Lucas S."/>
            <person name="Lapidus A."/>
            <person name="Barry K."/>
            <person name="Glavina del Rio T."/>
            <person name="Dalin E."/>
            <person name="Tice H."/>
            <person name="Pitluck S."/>
            <person name="Chain P."/>
            <person name="Malfatti S."/>
            <person name="Shin M."/>
            <person name="Vergez L."/>
            <person name="Schmutz J."/>
            <person name="Larimer F."/>
            <person name="Land M."/>
            <person name="Hauser L."/>
            <person name="Kyrpides N."/>
            <person name="Kim E."/>
            <person name="Taghavi S."/>
            <person name="Newman L."/>
            <person name="Vangronsveld J."/>
            <person name="van der Lelie D."/>
            <person name="Richardson P."/>
        </authorList>
    </citation>
    <scope>NUCLEOTIDE SEQUENCE [LARGE SCALE GENOMIC DNA]</scope>
    <source>
        <strain>568</strain>
    </source>
</reference>
<proteinExistence type="inferred from homology"/>
<feature type="chain" id="PRO_1000185276" description="p-hydroxybenzoic acid efflux pump subunit AaeA">
    <location>
        <begin position="1"/>
        <end position="311"/>
    </location>
</feature>
<feature type="transmembrane region" description="Helical" evidence="1">
    <location>
        <begin position="11"/>
        <end position="31"/>
    </location>
</feature>
<accession>A8GK45</accession>
<comment type="function">
    <text evidence="1">Forms an efflux pump with AaeB.</text>
</comment>
<comment type="subcellular location">
    <subcellularLocation>
        <location evidence="1">Cell inner membrane</location>
        <topology evidence="1">Single-pass membrane protein</topology>
    </subcellularLocation>
</comment>
<comment type="similarity">
    <text evidence="1">Belongs to the membrane fusion protein (MFP) (TC 8.A.1) family.</text>
</comment>
<evidence type="ECO:0000255" key="1">
    <source>
        <dbReference type="HAMAP-Rule" id="MF_01544"/>
    </source>
</evidence>